<keyword id="KW-0029">Amino-acid transport</keyword>
<keyword id="KW-1003">Cell membrane</keyword>
<keyword id="KW-0449">Lipoprotein</keyword>
<keyword id="KW-0472">Membrane</keyword>
<keyword id="KW-0564">Palmitate</keyword>
<keyword id="KW-1185">Reference proteome</keyword>
<keyword id="KW-0732">Signal</keyword>
<keyword id="KW-0813">Transport</keyword>
<feature type="signal peptide" evidence="1">
    <location>
        <begin position="1"/>
        <end position="19"/>
    </location>
</feature>
<feature type="chain" id="PRO_0000031779" description="Arginine-binding extracellular protein ArtP">
    <location>
        <begin position="20"/>
        <end position="255"/>
    </location>
</feature>
<feature type="lipid moiety-binding region" description="N-palmitoyl cysteine" evidence="3">
    <location>
        <position position="20"/>
    </location>
</feature>
<feature type="lipid moiety-binding region" description="S-diacylglycerol cysteine" evidence="3">
    <location>
        <position position="20"/>
    </location>
</feature>
<dbReference type="EMBL" id="D84432">
    <property type="protein sequence ID" value="BAA12604.1"/>
    <property type="molecule type" value="Genomic_DNA"/>
</dbReference>
<dbReference type="EMBL" id="AL009126">
    <property type="protein sequence ID" value="CAB14329.1"/>
    <property type="molecule type" value="Genomic_DNA"/>
</dbReference>
<dbReference type="PIR" id="F69962">
    <property type="entry name" value="F69962"/>
</dbReference>
<dbReference type="RefSeq" id="NP_390278.1">
    <property type="nucleotide sequence ID" value="NC_000964.3"/>
</dbReference>
<dbReference type="RefSeq" id="WP_004398706.1">
    <property type="nucleotide sequence ID" value="NZ_OZ025638.1"/>
</dbReference>
<dbReference type="SMR" id="P54535"/>
<dbReference type="FunCoup" id="P54535">
    <property type="interactions" value="160"/>
</dbReference>
<dbReference type="STRING" id="224308.BSU23980"/>
<dbReference type="TCDB" id="3.A.1.3.15">
    <property type="family name" value="the atp-binding cassette (abc) superfamily"/>
</dbReference>
<dbReference type="PaxDb" id="224308-BSU23980"/>
<dbReference type="EnsemblBacteria" id="CAB14329">
    <property type="protein sequence ID" value="CAB14329"/>
    <property type="gene ID" value="BSU_23980"/>
</dbReference>
<dbReference type="GeneID" id="938682"/>
<dbReference type="KEGG" id="bsu:BSU23980"/>
<dbReference type="PATRIC" id="fig|224308.179.peg.2612"/>
<dbReference type="eggNOG" id="COG0834">
    <property type="taxonomic scope" value="Bacteria"/>
</dbReference>
<dbReference type="InParanoid" id="P54535"/>
<dbReference type="OrthoDB" id="9811552at2"/>
<dbReference type="PhylomeDB" id="P54535"/>
<dbReference type="BioCyc" id="BSUB:BSU23980-MONOMER"/>
<dbReference type="Proteomes" id="UP000001570">
    <property type="component" value="Chromosome"/>
</dbReference>
<dbReference type="GO" id="GO:0030288">
    <property type="term" value="C:outer membrane-bounded periplasmic space"/>
    <property type="evidence" value="ECO:0000318"/>
    <property type="project" value="GO_Central"/>
</dbReference>
<dbReference type="GO" id="GO:0005886">
    <property type="term" value="C:plasma membrane"/>
    <property type="evidence" value="ECO:0007669"/>
    <property type="project" value="UniProtKB-SubCell"/>
</dbReference>
<dbReference type="GO" id="GO:0016597">
    <property type="term" value="F:amino acid binding"/>
    <property type="evidence" value="ECO:0000318"/>
    <property type="project" value="GO_Central"/>
</dbReference>
<dbReference type="GO" id="GO:0015276">
    <property type="term" value="F:ligand-gated monoatomic ion channel activity"/>
    <property type="evidence" value="ECO:0007669"/>
    <property type="project" value="InterPro"/>
</dbReference>
<dbReference type="GO" id="GO:0006865">
    <property type="term" value="P:amino acid transport"/>
    <property type="evidence" value="ECO:0007669"/>
    <property type="project" value="UniProtKB-KW"/>
</dbReference>
<dbReference type="CDD" id="cd13628">
    <property type="entry name" value="PBP2_Ala"/>
    <property type="match status" value="1"/>
</dbReference>
<dbReference type="Gene3D" id="3.40.190.10">
    <property type="entry name" value="Periplasmic binding protein-like II"/>
    <property type="match status" value="2"/>
</dbReference>
<dbReference type="InterPro" id="IPR001320">
    <property type="entry name" value="Iontro_rcpt_C"/>
</dbReference>
<dbReference type="InterPro" id="IPR018313">
    <property type="entry name" value="SBP_3_CS"/>
</dbReference>
<dbReference type="InterPro" id="IPR001638">
    <property type="entry name" value="Solute-binding_3/MltF_N"/>
</dbReference>
<dbReference type="PANTHER" id="PTHR35936:SF17">
    <property type="entry name" value="ARGININE-BINDING EXTRACELLULAR PROTEIN ARTP"/>
    <property type="match status" value="1"/>
</dbReference>
<dbReference type="PANTHER" id="PTHR35936">
    <property type="entry name" value="MEMBRANE-BOUND LYTIC MUREIN TRANSGLYCOSYLASE F"/>
    <property type="match status" value="1"/>
</dbReference>
<dbReference type="Pfam" id="PF00497">
    <property type="entry name" value="SBP_bac_3"/>
    <property type="match status" value="1"/>
</dbReference>
<dbReference type="SMART" id="SM00062">
    <property type="entry name" value="PBPb"/>
    <property type="match status" value="1"/>
</dbReference>
<dbReference type="SMART" id="SM00079">
    <property type="entry name" value="PBPe"/>
    <property type="match status" value="1"/>
</dbReference>
<dbReference type="SUPFAM" id="SSF53850">
    <property type="entry name" value="Periplasmic binding protein-like II"/>
    <property type="match status" value="1"/>
</dbReference>
<dbReference type="PROSITE" id="PS51257">
    <property type="entry name" value="PROKAR_LIPOPROTEIN"/>
    <property type="match status" value="1"/>
</dbReference>
<dbReference type="PROSITE" id="PS01039">
    <property type="entry name" value="SBP_BACTERIAL_3"/>
    <property type="match status" value="1"/>
</dbReference>
<comment type="function">
    <text evidence="2">Part of a binding-protein-dependent transport system for arginine.</text>
</comment>
<comment type="subcellular location">
    <subcellularLocation>
        <location evidence="3">Cell membrane</location>
        <topology evidence="3">Lipid-anchor</topology>
    </subcellularLocation>
</comment>
<comment type="disruption phenotype">
    <text evidence="2">Cells show impaired growth on arginine as the nitrogen source.</text>
</comment>
<comment type="similarity">
    <text evidence="3">Belongs to the bacterial solute-binding protein 3 family.</text>
</comment>
<gene>
    <name type="primary">artP</name>
    <name type="synonym">yqiX</name>
    <name type="ordered locus">BSU23980</name>
</gene>
<sequence>MKKWLLLLVAACITFALTACGSSNSGSESGKKKLIMGTSADYKPFEYKEGDNIVGFDVELAKALAKKAGYEIEVQDMDFNSLITALKSKQVDLVLSGMTPTPERKKQVDFSDVYYTANHMIVSKKDSGIQSLKDLKGKTVGVQLGSIQEEKGKELSPEYGFKTEDRNRISDLVQEIKSDRFDAAIIEDIVAEGYFKSNDDLQGFVIPDAKAEEAGSAIAFRKDSELTDKFNKALKEMEDNGELEKLKKKWFTGEK</sequence>
<evidence type="ECO:0000255" key="1">
    <source>
        <dbReference type="PROSITE-ProRule" id="PRU00303"/>
    </source>
</evidence>
<evidence type="ECO:0000269" key="2">
    <source>
    </source>
</evidence>
<evidence type="ECO:0000305" key="3"/>
<reference key="1">
    <citation type="journal article" date="1996" name="Microbiology">
        <title>Systematic sequencing of the 283 kb 210 degrees-232 degrees region of the Bacillus subtilis genome containing the skin element and many sporulation genes.</title>
        <authorList>
            <person name="Mizuno M."/>
            <person name="Masuda S."/>
            <person name="Takemaru K."/>
            <person name="Hosono S."/>
            <person name="Sato T."/>
            <person name="Takeuchi M."/>
            <person name="Kobayashi Y."/>
        </authorList>
    </citation>
    <scope>NUCLEOTIDE SEQUENCE [GENOMIC DNA]</scope>
    <source>
        <strain>168 / JH642</strain>
    </source>
</reference>
<reference key="2">
    <citation type="journal article" date="1997" name="Nature">
        <title>The complete genome sequence of the Gram-positive bacterium Bacillus subtilis.</title>
        <authorList>
            <person name="Kunst F."/>
            <person name="Ogasawara N."/>
            <person name="Moszer I."/>
            <person name="Albertini A.M."/>
            <person name="Alloni G."/>
            <person name="Azevedo V."/>
            <person name="Bertero M.G."/>
            <person name="Bessieres P."/>
            <person name="Bolotin A."/>
            <person name="Borchert S."/>
            <person name="Borriss R."/>
            <person name="Boursier L."/>
            <person name="Brans A."/>
            <person name="Braun M."/>
            <person name="Brignell S.C."/>
            <person name="Bron S."/>
            <person name="Brouillet S."/>
            <person name="Bruschi C.V."/>
            <person name="Caldwell B."/>
            <person name="Capuano V."/>
            <person name="Carter N.M."/>
            <person name="Choi S.-K."/>
            <person name="Codani J.-J."/>
            <person name="Connerton I.F."/>
            <person name="Cummings N.J."/>
            <person name="Daniel R.A."/>
            <person name="Denizot F."/>
            <person name="Devine K.M."/>
            <person name="Duesterhoeft A."/>
            <person name="Ehrlich S.D."/>
            <person name="Emmerson P.T."/>
            <person name="Entian K.-D."/>
            <person name="Errington J."/>
            <person name="Fabret C."/>
            <person name="Ferrari E."/>
            <person name="Foulger D."/>
            <person name="Fritz C."/>
            <person name="Fujita M."/>
            <person name="Fujita Y."/>
            <person name="Fuma S."/>
            <person name="Galizzi A."/>
            <person name="Galleron N."/>
            <person name="Ghim S.-Y."/>
            <person name="Glaser P."/>
            <person name="Goffeau A."/>
            <person name="Golightly E.J."/>
            <person name="Grandi G."/>
            <person name="Guiseppi G."/>
            <person name="Guy B.J."/>
            <person name="Haga K."/>
            <person name="Haiech J."/>
            <person name="Harwood C.R."/>
            <person name="Henaut A."/>
            <person name="Hilbert H."/>
            <person name="Holsappel S."/>
            <person name="Hosono S."/>
            <person name="Hullo M.-F."/>
            <person name="Itaya M."/>
            <person name="Jones L.-M."/>
            <person name="Joris B."/>
            <person name="Karamata D."/>
            <person name="Kasahara Y."/>
            <person name="Klaerr-Blanchard M."/>
            <person name="Klein C."/>
            <person name="Kobayashi Y."/>
            <person name="Koetter P."/>
            <person name="Koningstein G."/>
            <person name="Krogh S."/>
            <person name="Kumano M."/>
            <person name="Kurita K."/>
            <person name="Lapidus A."/>
            <person name="Lardinois S."/>
            <person name="Lauber J."/>
            <person name="Lazarevic V."/>
            <person name="Lee S.-M."/>
            <person name="Levine A."/>
            <person name="Liu H."/>
            <person name="Masuda S."/>
            <person name="Mauel C."/>
            <person name="Medigue C."/>
            <person name="Medina N."/>
            <person name="Mellado R.P."/>
            <person name="Mizuno M."/>
            <person name="Moestl D."/>
            <person name="Nakai S."/>
            <person name="Noback M."/>
            <person name="Noone D."/>
            <person name="O'Reilly M."/>
            <person name="Ogawa K."/>
            <person name="Ogiwara A."/>
            <person name="Oudega B."/>
            <person name="Park S.-H."/>
            <person name="Parro V."/>
            <person name="Pohl T.M."/>
            <person name="Portetelle D."/>
            <person name="Porwollik S."/>
            <person name="Prescott A.M."/>
            <person name="Presecan E."/>
            <person name="Pujic P."/>
            <person name="Purnelle B."/>
            <person name="Rapoport G."/>
            <person name="Rey M."/>
            <person name="Reynolds S."/>
            <person name="Rieger M."/>
            <person name="Rivolta C."/>
            <person name="Rocha E."/>
            <person name="Roche B."/>
            <person name="Rose M."/>
            <person name="Sadaie Y."/>
            <person name="Sato T."/>
            <person name="Scanlan E."/>
            <person name="Schleich S."/>
            <person name="Schroeter R."/>
            <person name="Scoffone F."/>
            <person name="Sekiguchi J."/>
            <person name="Sekowska A."/>
            <person name="Seror S.J."/>
            <person name="Serror P."/>
            <person name="Shin B.-S."/>
            <person name="Soldo B."/>
            <person name="Sorokin A."/>
            <person name="Tacconi E."/>
            <person name="Takagi T."/>
            <person name="Takahashi H."/>
            <person name="Takemaru K."/>
            <person name="Takeuchi M."/>
            <person name="Tamakoshi A."/>
            <person name="Tanaka T."/>
            <person name="Terpstra P."/>
            <person name="Tognoni A."/>
            <person name="Tosato V."/>
            <person name="Uchiyama S."/>
            <person name="Vandenbol M."/>
            <person name="Vannier F."/>
            <person name="Vassarotti A."/>
            <person name="Viari A."/>
            <person name="Wambutt R."/>
            <person name="Wedler E."/>
            <person name="Wedler H."/>
            <person name="Weitzenegger T."/>
            <person name="Winters P."/>
            <person name="Wipat A."/>
            <person name="Yamamoto H."/>
            <person name="Yamane K."/>
            <person name="Yasumoto K."/>
            <person name="Yata K."/>
            <person name="Yoshida K."/>
            <person name="Yoshikawa H.-F."/>
            <person name="Zumstein E."/>
            <person name="Yoshikawa H."/>
            <person name="Danchin A."/>
        </authorList>
    </citation>
    <scope>NUCLEOTIDE SEQUENCE [LARGE SCALE GENOMIC DNA]</scope>
    <source>
        <strain>168</strain>
    </source>
</reference>
<reference key="3">
    <citation type="journal article" date="2001" name="Genome Biol.">
        <title>Extracting biological information from DNA arrays: an unexpected link between arginine and methionine metabolism in Bacillus subtilis.</title>
        <authorList>
            <person name="Sekowska A."/>
            <person name="Robin S."/>
            <person name="Daudin J.-J."/>
            <person name="Henaut A."/>
            <person name="Danchin A."/>
        </authorList>
    </citation>
    <scope>FUNCTION IN ARGININE TRANSPORT</scope>
    <scope>DISRUPTION PHENOTYPE</scope>
    <source>
        <strain>168</strain>
    </source>
</reference>
<protein>
    <recommendedName>
        <fullName>Arginine-binding extracellular protein ArtP</fullName>
    </recommendedName>
</protein>
<organism>
    <name type="scientific">Bacillus subtilis (strain 168)</name>
    <dbReference type="NCBI Taxonomy" id="224308"/>
    <lineage>
        <taxon>Bacteria</taxon>
        <taxon>Bacillati</taxon>
        <taxon>Bacillota</taxon>
        <taxon>Bacilli</taxon>
        <taxon>Bacillales</taxon>
        <taxon>Bacillaceae</taxon>
        <taxon>Bacillus</taxon>
    </lineage>
</organism>
<accession>P54535</accession>
<proteinExistence type="evidence at protein level"/>
<name>ARTP_BACSU</name>